<proteinExistence type="inferred from homology"/>
<protein>
    <recommendedName>
        <fullName evidence="1">Ribosomal RNA small subunit methyltransferase H</fullName>
        <ecNumber evidence="1">2.1.1.199</ecNumber>
    </recommendedName>
    <alternativeName>
        <fullName evidence="1">16S rRNA m(4)C1402 methyltransferase</fullName>
    </alternativeName>
    <alternativeName>
        <fullName evidence="1">rRNA (cytosine-N(4)-)-methyltransferase RsmH</fullName>
    </alternativeName>
</protein>
<sequence>MKNNHIPVLLNEVLDNLALKENGIYIDLTLGMGGHSKEILKRIPKGKLIAFDKDDFAIKNASKTLSEVANNFEIIKSDFKDFKEELSNLGIYKVDGILADLGISSPQIDNAERGFSYLKNSALDMRMDQSQKLSAYDVVNLYPVEKLEYILKTYGEVKNYKYIASKIIEARPINTTLELANLIKSVTPQKLLKLKNPAKNVFQAIRIEVNNELDSIHQMLSSVEDLLKVNASLLIISFHSLEDKIVKNYFQELTKPKLPSKMPIQEDKFFATRRIYPSKQELNLNSRSKSAKLRILTKIKD</sequence>
<organism>
    <name type="scientific">Mycoplasmopsis synoviae (strain 53)</name>
    <name type="common">Mycoplasma synoviae</name>
    <dbReference type="NCBI Taxonomy" id="262723"/>
    <lineage>
        <taxon>Bacteria</taxon>
        <taxon>Bacillati</taxon>
        <taxon>Mycoplasmatota</taxon>
        <taxon>Mycoplasmoidales</taxon>
        <taxon>Metamycoplasmataceae</taxon>
        <taxon>Mycoplasmopsis</taxon>
    </lineage>
</organism>
<name>RSMH_MYCS5</name>
<evidence type="ECO:0000255" key="1">
    <source>
        <dbReference type="HAMAP-Rule" id="MF_01007"/>
    </source>
</evidence>
<feature type="chain" id="PRO_0000223548" description="Ribosomal RNA small subunit methyltransferase H">
    <location>
        <begin position="1"/>
        <end position="301"/>
    </location>
</feature>
<feature type="binding site" evidence="1">
    <location>
        <begin position="33"/>
        <end position="35"/>
    </location>
    <ligand>
        <name>S-adenosyl-L-methionine</name>
        <dbReference type="ChEBI" id="CHEBI:59789"/>
    </ligand>
</feature>
<feature type="binding site" evidence="1">
    <location>
        <position position="52"/>
    </location>
    <ligand>
        <name>S-adenosyl-L-methionine</name>
        <dbReference type="ChEBI" id="CHEBI:59789"/>
    </ligand>
</feature>
<feature type="binding site" evidence="1">
    <location>
        <position position="79"/>
    </location>
    <ligand>
        <name>S-adenosyl-L-methionine</name>
        <dbReference type="ChEBI" id="CHEBI:59789"/>
    </ligand>
</feature>
<feature type="binding site" evidence="1">
    <location>
        <position position="100"/>
    </location>
    <ligand>
        <name>S-adenosyl-L-methionine</name>
        <dbReference type="ChEBI" id="CHEBI:59789"/>
    </ligand>
</feature>
<feature type="binding site" evidence="1">
    <location>
        <position position="107"/>
    </location>
    <ligand>
        <name>S-adenosyl-L-methionine</name>
        <dbReference type="ChEBI" id="CHEBI:59789"/>
    </ligand>
</feature>
<reference key="1">
    <citation type="journal article" date="2005" name="J. Bacteriol.">
        <title>Swine and poultry pathogens: the complete genome sequences of two strains of Mycoplasma hyopneumoniae and a strain of Mycoplasma synoviae.</title>
        <authorList>
            <person name="Vasconcelos A.T.R."/>
            <person name="Ferreira H.B."/>
            <person name="Bizarro C.V."/>
            <person name="Bonatto S.L."/>
            <person name="Carvalho M.O."/>
            <person name="Pinto P.M."/>
            <person name="Almeida D.F."/>
            <person name="Almeida L.G.P."/>
            <person name="Almeida R."/>
            <person name="Alves-Junior L."/>
            <person name="Assuncao E.N."/>
            <person name="Azevedo V.A.C."/>
            <person name="Bogo M.R."/>
            <person name="Brigido M.M."/>
            <person name="Brocchi M."/>
            <person name="Burity H.A."/>
            <person name="Camargo A.A."/>
            <person name="Camargo S.S."/>
            <person name="Carepo M.S."/>
            <person name="Carraro D.M."/>
            <person name="de Mattos Cascardo J.C."/>
            <person name="Castro L.A."/>
            <person name="Cavalcanti G."/>
            <person name="Chemale G."/>
            <person name="Collevatti R.G."/>
            <person name="Cunha C.W."/>
            <person name="Dallagiovanna B."/>
            <person name="Dambros B.P."/>
            <person name="Dellagostin O.A."/>
            <person name="Falcao C."/>
            <person name="Fantinatti-Garboggini F."/>
            <person name="Felipe M.S.S."/>
            <person name="Fiorentin L."/>
            <person name="Franco G.R."/>
            <person name="Freitas N.S.A."/>
            <person name="Frias D."/>
            <person name="Grangeiro T.B."/>
            <person name="Grisard E.C."/>
            <person name="Guimaraes C.T."/>
            <person name="Hungria M."/>
            <person name="Jardim S.N."/>
            <person name="Krieger M.A."/>
            <person name="Laurino J.P."/>
            <person name="Lima L.F.A."/>
            <person name="Lopes M.I."/>
            <person name="Loreto E.L.S."/>
            <person name="Madeira H.M.F."/>
            <person name="Manfio G.P."/>
            <person name="Maranhao A.Q."/>
            <person name="Martinkovics C.T."/>
            <person name="Medeiros S.R.B."/>
            <person name="Moreira M.A.M."/>
            <person name="Neiva M."/>
            <person name="Ramalho-Neto C.E."/>
            <person name="Nicolas M.F."/>
            <person name="Oliveira S.C."/>
            <person name="Paixao R.F.C."/>
            <person name="Pedrosa F.O."/>
            <person name="Pena S.D.J."/>
            <person name="Pereira M."/>
            <person name="Pereira-Ferrari L."/>
            <person name="Piffer I."/>
            <person name="Pinto L.S."/>
            <person name="Potrich D.P."/>
            <person name="Salim A.C.M."/>
            <person name="Santos F.R."/>
            <person name="Schmitt R."/>
            <person name="Schneider M.P.C."/>
            <person name="Schrank A."/>
            <person name="Schrank I.S."/>
            <person name="Schuck A.F."/>
            <person name="Seuanez H.N."/>
            <person name="Silva D.W."/>
            <person name="Silva R."/>
            <person name="Silva S.C."/>
            <person name="Soares C.M.A."/>
            <person name="Souza K.R.L."/>
            <person name="Souza R.C."/>
            <person name="Staats C.C."/>
            <person name="Steffens M.B.R."/>
            <person name="Teixeira S.M.R."/>
            <person name="Urmenyi T.P."/>
            <person name="Vainstein M.H."/>
            <person name="Zuccherato L.W."/>
            <person name="Simpson A.J.G."/>
            <person name="Zaha A."/>
        </authorList>
    </citation>
    <scope>NUCLEOTIDE SEQUENCE [LARGE SCALE GENOMIC DNA]</scope>
    <source>
        <strain>53</strain>
    </source>
</reference>
<accession>Q4A667</accession>
<comment type="function">
    <text evidence="1">Specifically methylates the N4 position of cytidine in position 1402 (C1402) of 16S rRNA.</text>
</comment>
<comment type="catalytic activity">
    <reaction evidence="1">
        <text>cytidine(1402) in 16S rRNA + S-adenosyl-L-methionine = N(4)-methylcytidine(1402) in 16S rRNA + S-adenosyl-L-homocysteine + H(+)</text>
        <dbReference type="Rhea" id="RHEA:42928"/>
        <dbReference type="Rhea" id="RHEA-COMP:10286"/>
        <dbReference type="Rhea" id="RHEA-COMP:10287"/>
        <dbReference type="ChEBI" id="CHEBI:15378"/>
        <dbReference type="ChEBI" id="CHEBI:57856"/>
        <dbReference type="ChEBI" id="CHEBI:59789"/>
        <dbReference type="ChEBI" id="CHEBI:74506"/>
        <dbReference type="ChEBI" id="CHEBI:82748"/>
        <dbReference type="EC" id="2.1.1.199"/>
    </reaction>
</comment>
<comment type="subcellular location">
    <subcellularLocation>
        <location evidence="1">Cytoplasm</location>
    </subcellularLocation>
</comment>
<comment type="similarity">
    <text evidence="1">Belongs to the methyltransferase superfamily. RsmH family.</text>
</comment>
<keyword id="KW-0963">Cytoplasm</keyword>
<keyword id="KW-0489">Methyltransferase</keyword>
<keyword id="KW-1185">Reference proteome</keyword>
<keyword id="KW-0698">rRNA processing</keyword>
<keyword id="KW-0949">S-adenosyl-L-methionine</keyword>
<keyword id="KW-0808">Transferase</keyword>
<dbReference type="EC" id="2.1.1.199" evidence="1"/>
<dbReference type="EMBL" id="AE017245">
    <property type="protein sequence ID" value="AAZ43754.1"/>
    <property type="molecule type" value="Genomic_DNA"/>
</dbReference>
<dbReference type="RefSeq" id="WP_011283485.1">
    <property type="nucleotide sequence ID" value="NC_007294.1"/>
</dbReference>
<dbReference type="SMR" id="Q4A667"/>
<dbReference type="STRING" id="262723.MS53_0342"/>
<dbReference type="KEGG" id="msy:MS53_0342"/>
<dbReference type="eggNOG" id="COG0275">
    <property type="taxonomic scope" value="Bacteria"/>
</dbReference>
<dbReference type="HOGENOM" id="CLU_038422_2_0_14"/>
<dbReference type="OrthoDB" id="9806637at2"/>
<dbReference type="Proteomes" id="UP000000549">
    <property type="component" value="Chromosome"/>
</dbReference>
<dbReference type="GO" id="GO:0005737">
    <property type="term" value="C:cytoplasm"/>
    <property type="evidence" value="ECO:0007669"/>
    <property type="project" value="UniProtKB-SubCell"/>
</dbReference>
<dbReference type="GO" id="GO:0071424">
    <property type="term" value="F:rRNA (cytosine-N4-)-methyltransferase activity"/>
    <property type="evidence" value="ECO:0007669"/>
    <property type="project" value="UniProtKB-UniRule"/>
</dbReference>
<dbReference type="GO" id="GO:0070475">
    <property type="term" value="P:rRNA base methylation"/>
    <property type="evidence" value="ECO:0007669"/>
    <property type="project" value="UniProtKB-UniRule"/>
</dbReference>
<dbReference type="Gene3D" id="1.10.150.170">
    <property type="entry name" value="Putative methyltransferase TM0872, insert domain"/>
    <property type="match status" value="1"/>
</dbReference>
<dbReference type="Gene3D" id="3.40.50.150">
    <property type="entry name" value="Vaccinia Virus protein VP39"/>
    <property type="match status" value="1"/>
</dbReference>
<dbReference type="HAMAP" id="MF_01007">
    <property type="entry name" value="16SrRNA_methyltr_H"/>
    <property type="match status" value="1"/>
</dbReference>
<dbReference type="InterPro" id="IPR002903">
    <property type="entry name" value="RsmH"/>
</dbReference>
<dbReference type="InterPro" id="IPR023397">
    <property type="entry name" value="SAM-dep_MeTrfase_MraW_recog"/>
</dbReference>
<dbReference type="InterPro" id="IPR029063">
    <property type="entry name" value="SAM-dependent_MTases_sf"/>
</dbReference>
<dbReference type="NCBIfam" id="TIGR00006">
    <property type="entry name" value="16S rRNA (cytosine(1402)-N(4))-methyltransferase RsmH"/>
    <property type="match status" value="1"/>
</dbReference>
<dbReference type="PANTHER" id="PTHR11265:SF0">
    <property type="entry name" value="12S RRNA N4-METHYLCYTIDINE METHYLTRANSFERASE"/>
    <property type="match status" value="1"/>
</dbReference>
<dbReference type="PANTHER" id="PTHR11265">
    <property type="entry name" value="S-ADENOSYL-METHYLTRANSFERASE MRAW"/>
    <property type="match status" value="1"/>
</dbReference>
<dbReference type="Pfam" id="PF01795">
    <property type="entry name" value="Methyltransf_5"/>
    <property type="match status" value="1"/>
</dbReference>
<dbReference type="PIRSF" id="PIRSF004486">
    <property type="entry name" value="MraW"/>
    <property type="match status" value="1"/>
</dbReference>
<dbReference type="SUPFAM" id="SSF81799">
    <property type="entry name" value="Putative methyltransferase TM0872, insert domain"/>
    <property type="match status" value="1"/>
</dbReference>
<dbReference type="SUPFAM" id="SSF53335">
    <property type="entry name" value="S-adenosyl-L-methionine-dependent methyltransferases"/>
    <property type="match status" value="1"/>
</dbReference>
<gene>
    <name evidence="1" type="primary">rsmH</name>
    <name type="synonym">mraW</name>
    <name type="ordered locus">MS53_0342</name>
</gene>